<proteinExistence type="evidence at protein level"/>
<reference key="1">
    <citation type="journal article" date="1987" name="Biochemistry">
        <title>Ovomucoid third domains from 100 avian species: isolation, sequences, and hypervariability of enzyme-inhibitor contact residues.</title>
        <authorList>
            <person name="Laskowski M. Jr."/>
            <person name="Kato I."/>
            <person name="Ardelt W."/>
            <person name="Cook J."/>
            <person name="Denton A."/>
            <person name="Empie M.W."/>
            <person name="Kohr W.J."/>
            <person name="Park S.J."/>
            <person name="Parks K."/>
            <person name="Schatzley B.L."/>
            <person name="Schoenberger O.L."/>
            <person name="Tashiro M."/>
            <person name="Vichot G."/>
            <person name="Whatley H.E."/>
            <person name="Wieczorek A."/>
            <person name="Wieczorek M."/>
        </authorList>
    </citation>
    <scope>PROTEIN SEQUENCE</scope>
</reference>
<dbReference type="PIR" id="A31441">
    <property type="entry name" value="A31441"/>
</dbReference>
<dbReference type="SMR" id="P05607"/>
<dbReference type="iPTMnet" id="P05607"/>
<dbReference type="GO" id="GO:0005615">
    <property type="term" value="C:extracellular space"/>
    <property type="evidence" value="ECO:0007669"/>
    <property type="project" value="UniProtKB-ARBA"/>
</dbReference>
<dbReference type="GO" id="GO:0004867">
    <property type="term" value="F:serine-type endopeptidase inhibitor activity"/>
    <property type="evidence" value="ECO:0007669"/>
    <property type="project" value="UniProtKB-KW"/>
</dbReference>
<dbReference type="CDD" id="cd00104">
    <property type="entry name" value="KAZAL_FS"/>
    <property type="match status" value="1"/>
</dbReference>
<dbReference type="FunFam" id="3.30.60.30:FF:000037">
    <property type="entry name" value="Ovomucoid"/>
    <property type="match status" value="1"/>
</dbReference>
<dbReference type="Gene3D" id="3.30.60.30">
    <property type="match status" value="1"/>
</dbReference>
<dbReference type="InterPro" id="IPR051597">
    <property type="entry name" value="Bifunctional_prot_inhibitor"/>
</dbReference>
<dbReference type="InterPro" id="IPR002350">
    <property type="entry name" value="Kazal_dom"/>
</dbReference>
<dbReference type="InterPro" id="IPR036058">
    <property type="entry name" value="Kazal_dom_sf"/>
</dbReference>
<dbReference type="PANTHER" id="PTHR47729:SF1">
    <property type="entry name" value="OVOMUCOID-LIKE-RELATED"/>
    <property type="match status" value="1"/>
</dbReference>
<dbReference type="PANTHER" id="PTHR47729">
    <property type="entry name" value="SERINE PEPTIDASE INHIBITOR, KAZAL TYPE 2, TANDEM DUPLICATE 1-RELATED"/>
    <property type="match status" value="1"/>
</dbReference>
<dbReference type="Pfam" id="PF00050">
    <property type="entry name" value="Kazal_1"/>
    <property type="match status" value="1"/>
</dbReference>
<dbReference type="SMART" id="SM00280">
    <property type="entry name" value="KAZAL"/>
    <property type="match status" value="1"/>
</dbReference>
<dbReference type="SUPFAM" id="SSF100895">
    <property type="entry name" value="Kazal-type serine protease inhibitors"/>
    <property type="match status" value="1"/>
</dbReference>
<dbReference type="PROSITE" id="PS00282">
    <property type="entry name" value="KAZAL_1"/>
    <property type="match status" value="1"/>
</dbReference>
<dbReference type="PROSITE" id="PS51465">
    <property type="entry name" value="KAZAL_2"/>
    <property type="match status" value="1"/>
</dbReference>
<evidence type="ECO:0000255" key="1">
    <source>
        <dbReference type="PROSITE-ProRule" id="PRU00798"/>
    </source>
</evidence>
<evidence type="ECO:0000269" key="2">
    <source>
    </source>
</evidence>
<organism>
    <name type="scientific">Polyplectron bicalcaratum</name>
    <name type="common">Grey peacock-pheasant</name>
    <name type="synonym">Pavo bicalcaratus</name>
    <dbReference type="NCBI Taxonomy" id="9059"/>
    <lineage>
        <taxon>Eukaryota</taxon>
        <taxon>Metazoa</taxon>
        <taxon>Chordata</taxon>
        <taxon>Craniata</taxon>
        <taxon>Vertebrata</taxon>
        <taxon>Euteleostomi</taxon>
        <taxon>Archelosauria</taxon>
        <taxon>Archosauria</taxon>
        <taxon>Dinosauria</taxon>
        <taxon>Saurischia</taxon>
        <taxon>Theropoda</taxon>
        <taxon>Coelurosauria</taxon>
        <taxon>Aves</taxon>
        <taxon>Neognathae</taxon>
        <taxon>Galloanserae</taxon>
        <taxon>Galliformes</taxon>
        <taxon>Phasianidae</taxon>
        <taxon>Phasianinae</taxon>
        <taxon>Polyplectron</taxon>
    </lineage>
</organism>
<protein>
    <recommendedName>
        <fullName>Ovomucoid</fullName>
    </recommendedName>
</protein>
<accession>P05607</accession>
<feature type="chain" id="PRO_0000073167" description="Ovomucoid">
    <location>
        <begin position="1" status="less than"/>
        <end position="53" status="greater than"/>
    </location>
</feature>
<feature type="domain" description="Kazal-like" evidence="1">
    <location>
        <begin position="3"/>
        <end position="53"/>
    </location>
</feature>
<feature type="site" description="Reactive bond 3">
    <location>
        <begin position="15"/>
        <end position="16"/>
    </location>
</feature>
<feature type="glycosylation site" description="N-linked (GlcNAc...) asparagine" evidence="2">
    <location>
        <position position="42"/>
    </location>
</feature>
<feature type="disulfide bond">
    <location>
        <begin position="5"/>
        <end position="35"/>
    </location>
</feature>
<feature type="disulfide bond">
    <location>
        <begin position="13"/>
        <end position="32"/>
    </location>
</feature>
<feature type="disulfide bond">
    <location>
        <begin position="21"/>
        <end position="53"/>
    </location>
</feature>
<feature type="non-terminal residue">
    <location>
        <position position="1"/>
    </location>
</feature>
<feature type="non-terminal residue">
    <location>
        <position position="53"/>
    </location>
</feature>
<comment type="subcellular location">
    <subcellularLocation>
        <location>Secreted</location>
    </subcellularLocation>
</comment>
<comment type="domain">
    <text>Avian ovomucoid consists of three homologous, tandem Kazal family inhibitory domains.</text>
</comment>
<keyword id="KW-0903">Direct protein sequencing</keyword>
<keyword id="KW-1015">Disulfide bond</keyword>
<keyword id="KW-0325">Glycoprotein</keyword>
<keyword id="KW-0646">Protease inhibitor</keyword>
<keyword id="KW-0677">Repeat</keyword>
<keyword id="KW-0964">Secreted</keyword>
<keyword id="KW-0722">Serine protease inhibitor</keyword>
<sequence>VSVDCSEYPQPTCTTEHRPVCGSNNETYGNKCNFCNAVVKSNGTLTVSHFGKC</sequence>
<name>IOVO_POLBI</name>